<organism>
    <name type="scientific">Saccharomyces cerevisiae (strain ATCC 204508 / S288c)</name>
    <name type="common">Baker's yeast</name>
    <dbReference type="NCBI Taxonomy" id="559292"/>
    <lineage>
        <taxon>Eukaryota</taxon>
        <taxon>Fungi</taxon>
        <taxon>Dikarya</taxon>
        <taxon>Ascomycota</taxon>
        <taxon>Saccharomycotina</taxon>
        <taxon>Saccharomycetes</taxon>
        <taxon>Saccharomycetales</taxon>
        <taxon>Saccharomycetaceae</taxon>
        <taxon>Saccharomyces</taxon>
    </lineage>
</organism>
<comment type="miscellaneous">
    <text evidence="2">Present with 217 molecules/cell in log phase SD medium.</text>
</comment>
<keyword id="KW-1185">Reference proteome</keyword>
<proteinExistence type="evidence at protein level"/>
<gene>
    <name type="ordered locus">YJR142W</name>
    <name type="ORF">J2171</name>
</gene>
<sequence>MKVEKSSKGLEVLVRTQEDDLEGFSFLEIMDRVDPLPLDFENYKNFKEGIYYMCTHDGTKIGFVLKFAINEMETVCSEIFEETFQLDESRHELRFKSEDFDHRNNLIDQLARKMYLESSLSGVKGWRNEKYAVWVNKKPYVLVERAVAGVLGIITYGIHINGYVLDPKSKKVQFWVPRRSKTKQTWPLMLDNIIAGGLGYPYGIYETVLKESMEEANLEKSVIEDNIKATGSVSYLYFTGDISVTKFNKESDFIVGEVQYVYDLKLSEDIIPKPNDGEVESFNLFSLQETINALRKKEFKPNCALVMVDFLIRHGYITPENEPNYLELVTRMHRRLPFPTLN</sequence>
<protein>
    <recommendedName>
        <fullName>Uncharacterized protein YJR142W</fullName>
    </recommendedName>
</protein>
<name>YJ9J_YEAST</name>
<accession>P47173</accession>
<accession>D6VWW1</accession>
<dbReference type="EMBL" id="Z49642">
    <property type="protein sequence ID" value="CAA89675.1"/>
    <property type="molecule type" value="Genomic_DNA"/>
</dbReference>
<dbReference type="EMBL" id="AY558091">
    <property type="protein sequence ID" value="AAS56417.1"/>
    <property type="molecule type" value="Genomic_DNA"/>
</dbReference>
<dbReference type="EMBL" id="BK006943">
    <property type="protein sequence ID" value="DAA08927.1"/>
    <property type="molecule type" value="Genomic_DNA"/>
</dbReference>
<dbReference type="PIR" id="S57165">
    <property type="entry name" value="S57165"/>
</dbReference>
<dbReference type="RefSeq" id="NP_012676.3">
    <property type="nucleotide sequence ID" value="NM_001181800.3"/>
</dbReference>
<dbReference type="SMR" id="P47173"/>
<dbReference type="BioGRID" id="33898">
    <property type="interactions" value="62"/>
</dbReference>
<dbReference type="FunCoup" id="P47173">
    <property type="interactions" value="104"/>
</dbReference>
<dbReference type="IntAct" id="P47173">
    <property type="interactions" value="1"/>
</dbReference>
<dbReference type="STRING" id="4932.YJR142W"/>
<dbReference type="PaxDb" id="4932-YJR142W"/>
<dbReference type="PeptideAtlas" id="P47173"/>
<dbReference type="EnsemblFungi" id="YJR142W_mRNA">
    <property type="protein sequence ID" value="YJR142W"/>
    <property type="gene ID" value="YJR142W"/>
</dbReference>
<dbReference type="GeneID" id="853607"/>
<dbReference type="KEGG" id="sce:YJR142W"/>
<dbReference type="AGR" id="SGD:S000003903"/>
<dbReference type="SGD" id="S000003903">
    <property type="gene designation" value="YJR142W"/>
</dbReference>
<dbReference type="VEuPathDB" id="FungiDB:YJR142W"/>
<dbReference type="eggNOG" id="KOG4313">
    <property type="taxonomic scope" value="Eukaryota"/>
</dbReference>
<dbReference type="GeneTree" id="ENSGT00390000016016"/>
<dbReference type="HOGENOM" id="CLU_048013_0_1_1"/>
<dbReference type="InParanoid" id="P47173"/>
<dbReference type="OMA" id="HRRLEYP"/>
<dbReference type="OrthoDB" id="10261522at2759"/>
<dbReference type="BioCyc" id="YEAST:G3O-31757-MONOMER"/>
<dbReference type="BioGRID-ORCS" id="853607">
    <property type="hits" value="1 hit in 10 CRISPR screens"/>
</dbReference>
<dbReference type="PRO" id="PR:P47173"/>
<dbReference type="Proteomes" id="UP000002311">
    <property type="component" value="Chromosome X"/>
</dbReference>
<dbReference type="RNAct" id="P47173">
    <property type="molecule type" value="protein"/>
</dbReference>
<dbReference type="GO" id="GO:0044715">
    <property type="term" value="F:8-oxo-dGDP phosphatase activity"/>
    <property type="evidence" value="ECO:0000314"/>
    <property type="project" value="SGD"/>
</dbReference>
<dbReference type="CDD" id="cd03676">
    <property type="entry name" value="NUDIX_Tnr3_like"/>
    <property type="match status" value="1"/>
</dbReference>
<dbReference type="FunFam" id="3.90.79.10:FF:000019">
    <property type="entry name" value="Thiamin pyrophosphokinase, putative"/>
    <property type="match status" value="1"/>
</dbReference>
<dbReference type="Gene3D" id="3.90.79.10">
    <property type="entry name" value="Nucleoside Triphosphate Pyrophosphohydrolase"/>
    <property type="match status" value="1"/>
</dbReference>
<dbReference type="InterPro" id="IPR031804">
    <property type="entry name" value="DUF4743"/>
</dbReference>
<dbReference type="InterPro" id="IPR015797">
    <property type="entry name" value="NUDIX_hydrolase-like_dom_sf"/>
</dbReference>
<dbReference type="InterPro" id="IPR000086">
    <property type="entry name" value="NUDIX_hydrolase_dom"/>
</dbReference>
<dbReference type="PANTHER" id="PTHR13622">
    <property type="entry name" value="THIAMIN PYROPHOSPHOKINASE"/>
    <property type="match status" value="1"/>
</dbReference>
<dbReference type="PANTHER" id="PTHR13622:SF8">
    <property type="entry name" value="THIAMIN PYROPHOSPHOKINASE 1"/>
    <property type="match status" value="1"/>
</dbReference>
<dbReference type="Pfam" id="PF15916">
    <property type="entry name" value="DUF4743"/>
    <property type="match status" value="1"/>
</dbReference>
<dbReference type="SUPFAM" id="SSF55811">
    <property type="entry name" value="Nudix"/>
    <property type="match status" value="1"/>
</dbReference>
<dbReference type="PROSITE" id="PS51462">
    <property type="entry name" value="NUDIX"/>
    <property type="match status" value="1"/>
</dbReference>
<reference key="1">
    <citation type="journal article" date="1996" name="EMBO J.">
        <title>Complete nucleotide sequence of Saccharomyces cerevisiae chromosome X.</title>
        <authorList>
            <person name="Galibert F."/>
            <person name="Alexandraki D."/>
            <person name="Baur A."/>
            <person name="Boles E."/>
            <person name="Chalwatzis N."/>
            <person name="Chuat J.-C."/>
            <person name="Coster F."/>
            <person name="Cziepluch C."/>
            <person name="de Haan M."/>
            <person name="Domdey H."/>
            <person name="Durand P."/>
            <person name="Entian K.-D."/>
            <person name="Gatius M."/>
            <person name="Goffeau A."/>
            <person name="Grivell L.A."/>
            <person name="Hennemann A."/>
            <person name="Herbert C.J."/>
            <person name="Heumann K."/>
            <person name="Hilger F."/>
            <person name="Hollenberg C.P."/>
            <person name="Huang M.-E."/>
            <person name="Jacq C."/>
            <person name="Jauniaux J.-C."/>
            <person name="Katsoulou C."/>
            <person name="Kirchrath L."/>
            <person name="Kleine K."/>
            <person name="Kordes E."/>
            <person name="Koetter P."/>
            <person name="Liebl S."/>
            <person name="Louis E.J."/>
            <person name="Manus V."/>
            <person name="Mewes H.-W."/>
            <person name="Miosga T."/>
            <person name="Obermaier B."/>
            <person name="Perea J."/>
            <person name="Pohl T.M."/>
            <person name="Portetelle D."/>
            <person name="Pujol A."/>
            <person name="Purnelle B."/>
            <person name="Ramezani Rad M."/>
            <person name="Rasmussen S.W."/>
            <person name="Rose M."/>
            <person name="Rossau R."/>
            <person name="Schaaff-Gerstenschlaeger I."/>
            <person name="Smits P.H.M."/>
            <person name="Scarcez T."/>
            <person name="Soriano N."/>
            <person name="To Van D."/>
            <person name="Tzermia M."/>
            <person name="Van Broekhoven A."/>
            <person name="Vandenbol M."/>
            <person name="Wedler H."/>
            <person name="von Wettstein D."/>
            <person name="Wambutt R."/>
            <person name="Zagulski M."/>
            <person name="Zollner A."/>
            <person name="Karpfinger-Hartl L."/>
        </authorList>
    </citation>
    <scope>NUCLEOTIDE SEQUENCE [LARGE SCALE GENOMIC DNA]</scope>
    <source>
        <strain>ATCC 204508 / S288c</strain>
    </source>
</reference>
<reference key="2">
    <citation type="journal article" date="2014" name="G3 (Bethesda)">
        <title>The reference genome sequence of Saccharomyces cerevisiae: Then and now.</title>
        <authorList>
            <person name="Engel S.R."/>
            <person name="Dietrich F.S."/>
            <person name="Fisk D.G."/>
            <person name="Binkley G."/>
            <person name="Balakrishnan R."/>
            <person name="Costanzo M.C."/>
            <person name="Dwight S.S."/>
            <person name="Hitz B.C."/>
            <person name="Karra K."/>
            <person name="Nash R.S."/>
            <person name="Weng S."/>
            <person name="Wong E.D."/>
            <person name="Lloyd P."/>
            <person name="Skrzypek M.S."/>
            <person name="Miyasato S.R."/>
            <person name="Simison M."/>
            <person name="Cherry J.M."/>
        </authorList>
    </citation>
    <scope>GENOME REANNOTATION</scope>
    <source>
        <strain>ATCC 204508 / S288c</strain>
    </source>
</reference>
<reference key="3">
    <citation type="journal article" date="2007" name="Genome Res.">
        <title>Approaching a complete repository of sequence-verified protein-encoding clones for Saccharomyces cerevisiae.</title>
        <authorList>
            <person name="Hu Y."/>
            <person name="Rolfs A."/>
            <person name="Bhullar B."/>
            <person name="Murthy T.V.S."/>
            <person name="Zhu C."/>
            <person name="Berger M.F."/>
            <person name="Camargo A.A."/>
            <person name="Kelley F."/>
            <person name="McCarron S."/>
            <person name="Jepson D."/>
            <person name="Richardson A."/>
            <person name="Raphael J."/>
            <person name="Moreira D."/>
            <person name="Taycher E."/>
            <person name="Zuo D."/>
            <person name="Mohr S."/>
            <person name="Kane M.F."/>
            <person name="Williamson J."/>
            <person name="Simpson A.J.G."/>
            <person name="Bulyk M.L."/>
            <person name="Harlow E."/>
            <person name="Marsischky G."/>
            <person name="Kolodner R.D."/>
            <person name="LaBaer J."/>
        </authorList>
    </citation>
    <scope>NUCLEOTIDE SEQUENCE [GENOMIC DNA]</scope>
    <source>
        <strain>ATCC 204508 / S288c</strain>
    </source>
</reference>
<reference key="4">
    <citation type="journal article" date="2003" name="Nature">
        <title>Global analysis of protein expression in yeast.</title>
        <authorList>
            <person name="Ghaemmaghami S."/>
            <person name="Huh W.-K."/>
            <person name="Bower K."/>
            <person name="Howson R.W."/>
            <person name="Belle A."/>
            <person name="Dephoure N."/>
            <person name="O'Shea E.K."/>
            <person name="Weissman J.S."/>
        </authorList>
    </citation>
    <scope>LEVEL OF PROTEIN EXPRESSION [LARGE SCALE ANALYSIS]</scope>
</reference>
<evidence type="ECO:0000255" key="1">
    <source>
        <dbReference type="PROSITE-ProRule" id="PRU00794"/>
    </source>
</evidence>
<evidence type="ECO:0000269" key="2">
    <source>
    </source>
</evidence>
<feature type="chain" id="PRO_0000203126" description="Uncharacterized protein YJR142W">
    <location>
        <begin position="1"/>
        <end position="342"/>
    </location>
</feature>
<feature type="domain" description="Nudix hydrolase" evidence="1">
    <location>
        <begin position="155"/>
        <end position="309"/>
    </location>
</feature>